<proteinExistence type="evidence at protein level"/>
<geneLocation type="plasmid">
    <name>p42f</name>
</geneLocation>
<evidence type="ECO:0000250" key="1">
    <source>
        <dbReference type="UniProtKB" id="O93627"/>
    </source>
</evidence>
<evidence type="ECO:0000269" key="2">
    <source>
    </source>
</evidence>
<evidence type="ECO:0000303" key="3">
    <source>
    </source>
</evidence>
<evidence type="ECO:0000305" key="4"/>
<evidence type="ECO:0000312" key="5">
    <source>
        <dbReference type="EMBL" id="ABC93936.1"/>
    </source>
</evidence>
<organism>
    <name type="scientific">Rhizobium etli (strain ATCC 51251 / DSM 11541 / JCM 21823 / NBRC 15573 / CFN 42)</name>
    <dbReference type="NCBI Taxonomy" id="347834"/>
    <lineage>
        <taxon>Bacteria</taxon>
        <taxon>Pseudomonadati</taxon>
        <taxon>Pseudomonadota</taxon>
        <taxon>Alphaproteobacteria</taxon>
        <taxon>Hyphomicrobiales</taxon>
        <taxon>Rhizobiaceae</taxon>
        <taxon>Rhizobium/Agrobacterium group</taxon>
        <taxon>Rhizobium</taxon>
    </lineage>
</organism>
<sequence length="417" mass="44833">MITLTYRIETPGSVETMADKIASDQSTGTFVPVPGETEELKSRVAARVLAIRPLENARHPTWPESAPDTLLHRADVDIAFPLEAIGTDLSALMTIAIGGVYSIKGMTGIRIVDMKLPEAFRSAHPGPQFGIAGSRRLTGVEGRPIIGTIVKPALGLRPHETAELVGELIGSGVDFIKDDEKLMSPAYSPLKERVAAIMPRILDHEQKTGKKVMYAFGISHADPDEMMRNHDIVAAAGGNCAVVNINSIGFGGMSFLRKRSSLVLHAHRNGWDVLTRDPGAGMDFKVYQQFWRLLGVDQFQINGIRIKYWEPDESFVSSFKAVSTPLFDAADCPLPVAGSGQWGGQAPETYERTGRTIDLLYLCGGGIVSHPGGPAAGVRAVQQAWQAAVAGIPLEVYAKDHPELAASIAKFSDGKGA</sequence>
<comment type="function">
    <text evidence="2">Involved in catabolism of D-apiose. Catalyzes the decarboxylation of 3-oxo-isoapionate 4-phosphate to L-erythrulose 1-phosphate.</text>
</comment>
<comment type="catalytic activity">
    <reaction evidence="2">
        <text>3-oxoisoapionate 4-phosphate + H(+) = L-erythrulose 1-phosphate + CO2</text>
        <dbReference type="Rhea" id="RHEA:57072"/>
        <dbReference type="ChEBI" id="CHEBI:15378"/>
        <dbReference type="ChEBI" id="CHEBI:16526"/>
        <dbReference type="ChEBI" id="CHEBI:58002"/>
        <dbReference type="ChEBI" id="CHEBI:141357"/>
        <dbReference type="EC" id="4.1.1.121"/>
    </reaction>
</comment>
<comment type="cofactor">
    <cofactor evidence="1">
        <name>Mg(2+)</name>
        <dbReference type="ChEBI" id="CHEBI:18420"/>
    </cofactor>
</comment>
<comment type="pathway">
    <text evidence="2">Carbohydrate metabolism.</text>
</comment>
<comment type="similarity">
    <text evidence="4">Belongs to the RuBisCO large chain family.</text>
</comment>
<keyword id="KW-0119">Carbohydrate metabolism</keyword>
<keyword id="KW-0210">Decarboxylase</keyword>
<keyword id="KW-0456">Lyase</keyword>
<keyword id="KW-0460">Magnesium</keyword>
<keyword id="KW-0479">Metal-binding</keyword>
<keyword id="KW-0614">Plasmid</keyword>
<keyword id="KW-1185">Reference proteome</keyword>
<protein>
    <recommendedName>
        <fullName evidence="3">3-oxo-isoapionate-4-phosphate decarboxylase</fullName>
        <ecNumber evidence="2">4.1.1.121</ecNumber>
    </recommendedName>
</protein>
<name>OIAX_RHIEC</name>
<reference key="1">
    <citation type="journal article" date="2006" name="Proc. Natl. Acad. Sci. U.S.A.">
        <title>The partitioned Rhizobium etli genome: genetic and metabolic redundancy in seven interacting replicons.</title>
        <authorList>
            <person name="Gonzalez V."/>
            <person name="Santamaria R.I."/>
            <person name="Bustos P."/>
            <person name="Hernandez-Gonzalez I."/>
            <person name="Medrano-Soto A."/>
            <person name="Moreno-Hagelsieb G."/>
            <person name="Janga S.C."/>
            <person name="Ramirez M.A."/>
            <person name="Jimenez-Jacinto V."/>
            <person name="Collado-Vides J."/>
            <person name="Davila G."/>
        </authorList>
    </citation>
    <scope>NUCLEOTIDE SEQUENCE [LARGE SCALE GENOMIC DNA]</scope>
    <source>
        <strain>ATCC 51251 / DSM 11541 / JCM 21823 / NBRC 15573 / CFN 42</strain>
    </source>
</reference>
<reference key="2">
    <citation type="journal article" date="2018" name="Nat. Chem. Biol.">
        <title>Functional assignment of multiple catabolic pathways for D-apiose.</title>
        <authorList>
            <person name="Carter M.S."/>
            <person name="Zhang X."/>
            <person name="Huang H."/>
            <person name="Bouvier J.T."/>
            <person name="Francisco B.S."/>
            <person name="Vetting M.W."/>
            <person name="Al-Obaidi N."/>
            <person name="Bonanno J.B."/>
            <person name="Ghosh A."/>
            <person name="Zallot R.G."/>
            <person name="Andersen H.M."/>
            <person name="Almo S.C."/>
            <person name="Gerlt J.A."/>
        </authorList>
    </citation>
    <scope>FUNCTION</scope>
    <scope>CATALYTIC ACTIVITY</scope>
    <scope>PATHWAY</scope>
    <source>
        <strain>ATCC 51251 / DSM 11541 / JCM 21823 / NBRC 15573 / CFN 42</strain>
    </source>
</reference>
<gene>
    <name evidence="3" type="primary">oiaX</name>
    <name evidence="5" type="ordered locus">RHE_PF00042</name>
</gene>
<accession>Q2JZQ0</accession>
<feature type="chain" id="PRO_0000450939" description="3-oxo-isoapionate-4-phosphate decarboxylase">
    <location>
        <begin position="1"/>
        <end position="417"/>
    </location>
</feature>
<feature type="binding site" description="via carbamate group" evidence="1">
    <location>
        <position position="177"/>
    </location>
    <ligand>
        <name>Mg(2+)</name>
        <dbReference type="ChEBI" id="CHEBI:18420"/>
    </ligand>
</feature>
<feature type="binding site" evidence="1">
    <location>
        <position position="179"/>
    </location>
    <ligand>
        <name>Mg(2+)</name>
        <dbReference type="ChEBI" id="CHEBI:18420"/>
    </ligand>
</feature>
<feature type="binding site" evidence="1">
    <location>
        <position position="180"/>
    </location>
    <ligand>
        <name>Mg(2+)</name>
        <dbReference type="ChEBI" id="CHEBI:18420"/>
    </ligand>
</feature>
<feature type="modified residue" description="N6-carboxylysine" evidence="1">
    <location>
        <position position="177"/>
    </location>
</feature>
<dbReference type="EC" id="4.1.1.121" evidence="2"/>
<dbReference type="EMBL" id="CP000138">
    <property type="protein sequence ID" value="ABC93936.1"/>
    <property type="molecule type" value="Genomic_DNA"/>
</dbReference>
<dbReference type="SMR" id="Q2JZQ0"/>
<dbReference type="KEGG" id="ret:RHE_PF00042"/>
<dbReference type="HOGENOM" id="CLU_031450_3_0_5"/>
<dbReference type="Proteomes" id="UP000001936">
    <property type="component" value="Plasmid p42f"/>
</dbReference>
<dbReference type="GO" id="GO:0000287">
    <property type="term" value="F:magnesium ion binding"/>
    <property type="evidence" value="ECO:0007669"/>
    <property type="project" value="InterPro"/>
</dbReference>
<dbReference type="GO" id="GO:0016984">
    <property type="term" value="F:ribulose-bisphosphate carboxylase activity"/>
    <property type="evidence" value="ECO:0007669"/>
    <property type="project" value="InterPro"/>
</dbReference>
<dbReference type="GO" id="GO:0015977">
    <property type="term" value="P:carbon fixation"/>
    <property type="evidence" value="ECO:0007669"/>
    <property type="project" value="InterPro"/>
</dbReference>
<dbReference type="CDD" id="cd08207">
    <property type="entry name" value="RLP_NonPhot"/>
    <property type="match status" value="1"/>
</dbReference>
<dbReference type="Gene3D" id="3.20.20.110">
    <property type="entry name" value="Ribulose bisphosphate carboxylase, large subunit, C-terminal domain"/>
    <property type="match status" value="1"/>
</dbReference>
<dbReference type="Gene3D" id="3.30.70.150">
    <property type="entry name" value="RuBisCO large subunit, N-terminal domain"/>
    <property type="match status" value="1"/>
</dbReference>
<dbReference type="InterPro" id="IPR050030">
    <property type="entry name" value="OiaX"/>
</dbReference>
<dbReference type="InterPro" id="IPR033966">
    <property type="entry name" value="RuBisCO"/>
</dbReference>
<dbReference type="InterPro" id="IPR020878">
    <property type="entry name" value="RuBisCo_large_chain_AS"/>
</dbReference>
<dbReference type="InterPro" id="IPR000685">
    <property type="entry name" value="RuBisCO_lsu_C"/>
</dbReference>
<dbReference type="InterPro" id="IPR036376">
    <property type="entry name" value="RuBisCO_lsu_C_sf"/>
</dbReference>
<dbReference type="InterPro" id="IPR017443">
    <property type="entry name" value="RuBisCO_lsu_fd_N"/>
</dbReference>
<dbReference type="InterPro" id="IPR036422">
    <property type="entry name" value="RuBisCO_lsu_N_sf"/>
</dbReference>
<dbReference type="NCBIfam" id="NF042437">
    <property type="entry name" value="OxoIsoapPDcar_OiaX"/>
    <property type="match status" value="1"/>
</dbReference>
<dbReference type="PANTHER" id="PTHR42704">
    <property type="entry name" value="RIBULOSE BISPHOSPHATE CARBOXYLASE"/>
    <property type="match status" value="1"/>
</dbReference>
<dbReference type="PANTHER" id="PTHR42704:SF17">
    <property type="entry name" value="RIBULOSE BISPHOSPHATE CARBOXYLASE LARGE CHAIN"/>
    <property type="match status" value="1"/>
</dbReference>
<dbReference type="Pfam" id="PF00016">
    <property type="entry name" value="RuBisCO_large"/>
    <property type="match status" value="1"/>
</dbReference>
<dbReference type="Pfam" id="PF02788">
    <property type="entry name" value="RuBisCO_large_N"/>
    <property type="match status" value="1"/>
</dbReference>
<dbReference type="SFLD" id="SFLDS00014">
    <property type="entry name" value="RuBisCO"/>
    <property type="match status" value="1"/>
</dbReference>
<dbReference type="SFLD" id="SFLDG00301">
    <property type="entry name" value="RuBisCO-like_proteins"/>
    <property type="match status" value="1"/>
</dbReference>
<dbReference type="SUPFAM" id="SSF51649">
    <property type="entry name" value="RuBisCo, C-terminal domain"/>
    <property type="match status" value="1"/>
</dbReference>
<dbReference type="SUPFAM" id="SSF54966">
    <property type="entry name" value="RuBisCO, large subunit, small (N-terminal) domain"/>
    <property type="match status" value="1"/>
</dbReference>
<dbReference type="PROSITE" id="PS00157">
    <property type="entry name" value="RUBISCO_LARGE"/>
    <property type="match status" value="1"/>
</dbReference>